<gene>
    <name type="primary">FH11</name>
    <name type="ordered locus">At3g05470</name>
    <name type="ORF">F22F7.8</name>
</gene>
<reference key="1">
    <citation type="journal article" date="2000" name="Nature">
        <title>Sequence and analysis of chromosome 3 of the plant Arabidopsis thaliana.</title>
        <authorList>
            <person name="Salanoubat M."/>
            <person name="Lemcke K."/>
            <person name="Rieger M."/>
            <person name="Ansorge W."/>
            <person name="Unseld M."/>
            <person name="Fartmann B."/>
            <person name="Valle G."/>
            <person name="Bloecker H."/>
            <person name="Perez-Alonso M."/>
            <person name="Obermaier B."/>
            <person name="Delseny M."/>
            <person name="Boutry M."/>
            <person name="Grivell L.A."/>
            <person name="Mache R."/>
            <person name="Puigdomenech P."/>
            <person name="De Simone V."/>
            <person name="Choisne N."/>
            <person name="Artiguenave F."/>
            <person name="Robert C."/>
            <person name="Brottier P."/>
            <person name="Wincker P."/>
            <person name="Cattolico L."/>
            <person name="Weissenbach J."/>
            <person name="Saurin W."/>
            <person name="Quetier F."/>
            <person name="Schaefer M."/>
            <person name="Mueller-Auer S."/>
            <person name="Gabel C."/>
            <person name="Fuchs M."/>
            <person name="Benes V."/>
            <person name="Wurmbach E."/>
            <person name="Drzonek H."/>
            <person name="Erfle H."/>
            <person name="Jordan N."/>
            <person name="Bangert S."/>
            <person name="Wiedelmann R."/>
            <person name="Kranz H."/>
            <person name="Voss H."/>
            <person name="Holland R."/>
            <person name="Brandt P."/>
            <person name="Nyakatura G."/>
            <person name="Vezzi A."/>
            <person name="D'Angelo M."/>
            <person name="Pallavicini A."/>
            <person name="Toppo S."/>
            <person name="Simionati B."/>
            <person name="Conrad A."/>
            <person name="Hornischer K."/>
            <person name="Kauer G."/>
            <person name="Loehnert T.-H."/>
            <person name="Nordsiek G."/>
            <person name="Reichelt J."/>
            <person name="Scharfe M."/>
            <person name="Schoen O."/>
            <person name="Bargues M."/>
            <person name="Terol J."/>
            <person name="Climent J."/>
            <person name="Navarro P."/>
            <person name="Collado C."/>
            <person name="Perez-Perez A."/>
            <person name="Ottenwaelder B."/>
            <person name="Duchemin D."/>
            <person name="Cooke R."/>
            <person name="Laudie M."/>
            <person name="Berger-Llauro C."/>
            <person name="Purnelle B."/>
            <person name="Masuy D."/>
            <person name="de Haan M."/>
            <person name="Maarse A.C."/>
            <person name="Alcaraz J.-P."/>
            <person name="Cottet A."/>
            <person name="Casacuberta E."/>
            <person name="Monfort A."/>
            <person name="Argiriou A."/>
            <person name="Flores M."/>
            <person name="Liguori R."/>
            <person name="Vitale D."/>
            <person name="Mannhaupt G."/>
            <person name="Haase D."/>
            <person name="Schoof H."/>
            <person name="Rudd S."/>
            <person name="Zaccaria P."/>
            <person name="Mewes H.-W."/>
            <person name="Mayer K.F.X."/>
            <person name="Kaul S."/>
            <person name="Town C.D."/>
            <person name="Koo H.L."/>
            <person name="Tallon L.J."/>
            <person name="Jenkins J."/>
            <person name="Rooney T."/>
            <person name="Rizzo M."/>
            <person name="Walts A."/>
            <person name="Utterback T."/>
            <person name="Fujii C.Y."/>
            <person name="Shea T.P."/>
            <person name="Creasy T.H."/>
            <person name="Haas B."/>
            <person name="Maiti R."/>
            <person name="Wu D."/>
            <person name="Peterson J."/>
            <person name="Van Aken S."/>
            <person name="Pai G."/>
            <person name="Militscher J."/>
            <person name="Sellers P."/>
            <person name="Gill J.E."/>
            <person name="Feldblyum T.V."/>
            <person name="Preuss D."/>
            <person name="Lin X."/>
            <person name="Nierman W.C."/>
            <person name="Salzberg S.L."/>
            <person name="White O."/>
            <person name="Venter J.C."/>
            <person name="Fraser C.M."/>
            <person name="Kaneko T."/>
            <person name="Nakamura Y."/>
            <person name="Sato S."/>
            <person name="Kato T."/>
            <person name="Asamizu E."/>
            <person name="Sasamoto S."/>
            <person name="Kimura T."/>
            <person name="Idesawa K."/>
            <person name="Kawashima K."/>
            <person name="Kishida Y."/>
            <person name="Kiyokawa C."/>
            <person name="Kohara M."/>
            <person name="Matsumoto M."/>
            <person name="Matsuno A."/>
            <person name="Muraki A."/>
            <person name="Nakayama S."/>
            <person name="Nakazaki N."/>
            <person name="Shinpo S."/>
            <person name="Takeuchi C."/>
            <person name="Wada T."/>
            <person name="Watanabe A."/>
            <person name="Yamada M."/>
            <person name="Yasuda M."/>
            <person name="Tabata S."/>
        </authorList>
    </citation>
    <scope>NUCLEOTIDE SEQUENCE [LARGE SCALE GENOMIC DNA]</scope>
    <source>
        <strain>cv. Columbia</strain>
    </source>
</reference>
<reference key="2">
    <citation type="journal article" date="2017" name="Plant J.">
        <title>Araport11: a complete reannotation of the Arabidopsis thaliana reference genome.</title>
        <authorList>
            <person name="Cheng C.Y."/>
            <person name="Krishnakumar V."/>
            <person name="Chan A.P."/>
            <person name="Thibaud-Nissen F."/>
            <person name="Schobel S."/>
            <person name="Town C.D."/>
        </authorList>
    </citation>
    <scope>GENOME REANNOTATION</scope>
    <source>
        <strain>cv. Columbia</strain>
    </source>
</reference>
<reference key="3">
    <citation type="journal article" date="2002" name="Trends Plant Sci.">
        <title>Formins: intermediates in signal-transduction cascades that affect cytoskeletal reorganization.</title>
        <authorList>
            <person name="Deeks M.J."/>
            <person name="Hussey P.J."/>
            <person name="Davies B."/>
        </authorList>
    </citation>
    <scope>GENE FAMILY ORGANIZATION</scope>
    <scope>NOMENCLATURE</scope>
</reference>
<reference key="4">
    <citation type="journal article" date="2004" name="BMC Genomics">
        <title>Formin homology 2 domains occur in multiple contexts in angiosperms.</title>
        <authorList>
            <person name="Cvrckova F."/>
            <person name="Novotny M."/>
            <person name="Pickova D."/>
            <person name="Zarsky V."/>
        </authorList>
    </citation>
    <scope>GENE FAMILY ORGANIZATION</scope>
    <scope>NOMENCLATURE</scope>
</reference>
<proteinExistence type="evidence at transcript level"/>
<evidence type="ECO:0000250" key="1"/>
<evidence type="ECO:0000255" key="2"/>
<evidence type="ECO:0000255" key="3">
    <source>
        <dbReference type="PROSITE-ProRule" id="PRU00774"/>
    </source>
</evidence>
<evidence type="ECO:0000256" key="4">
    <source>
        <dbReference type="SAM" id="MobiDB-lite"/>
    </source>
</evidence>
<evidence type="ECO:0000305" key="5"/>
<sequence>MVYFRQIFLMIIVVSLHCCKVRFFCIVANAKELDDWKVLTVENGERYRTHVGRYAGEEGGEKIKLRVLEKFRALLDLIKPSTSRRRNLAESASFSPWPAPSPSPFPNGGPIESPAYPPAPPRPIPPHLRRPLPQRTHPLEQPEIQRRKHEKGGTFKKILVPVVASTASAIGFVVCVVGVFCLCARRKRKMNGKTLSFKRKKGKSQSSTRKVSVNPTLDFLYLNSLGVDLERQNSVSVKEIRETEKDLNGINGGLLEEEVKRSIETEISHDWDNASSYSTKEIVSVHENDEEQTVNSVSVPVVVINDSSDDDESFHSVGGGSQYSNPRLSNASSASGSVNVGSSQRFSEHKLDIPECSRSDFGISVSAPPPPPPPPPPLPQFSNKRIHTLSSPETANLQTLSSQLCEKLCASSSKTSFPINVPNSQPRPPPPPPPPQQLQVAGINKTPPPPLSLDFSERRPLGKDGAPLPKLKPLHWDKVRATPDRTMVWDKLRTSSFELDEEMIESLFGYTMQSSTKNEEGKSKTPSPGKHLLEPKRLQNFTILLKALNATADQICSALGKGEGLCLQQLEALVKMVPTKEEELKLRSYKGAVDELGSAEKFLRALVGVPFAFQRAEAMLYRETFEDEVVHLRNSFSMLEEACKELKSSRLFLKLLEAVLKTGNRMNVGTIRGGAKAFKLDALLKLSDVKGTDGKTTLLHFVVQEISRSEGIRVSDSIMGRIMNQRSNKNRTPEEKEEDYRRMGLDLVSGLNTELRNVKKTATIDLEGLVTSVSNLRDGLGQLSCLASEKLKGDEENRAFVSSMSSFLRYGEKSLEELREDEKRIMERVGEIAEYFHGDVRGDEKNPLRIFVIVRDFLGMLDHVCRELRCVRVPNSPSPLAPFR</sequence>
<name>FH11_ARATH</name>
<protein>
    <recommendedName>
        <fullName>Formin-like protein 11</fullName>
        <shortName>AtFH11</shortName>
    </recommendedName>
</protein>
<keyword id="KW-0472">Membrane</keyword>
<keyword id="KW-1185">Reference proteome</keyword>
<keyword id="KW-0732">Signal</keyword>
<keyword id="KW-0812">Transmembrane</keyword>
<keyword id="KW-1133">Transmembrane helix</keyword>
<accession>Q9MA60</accession>
<dbReference type="EMBL" id="AC009606">
    <property type="protein sequence ID" value="AAF64546.1"/>
    <property type="molecule type" value="Genomic_DNA"/>
</dbReference>
<dbReference type="EMBL" id="CP002686">
    <property type="protein sequence ID" value="AEE74244.1"/>
    <property type="molecule type" value="Genomic_DNA"/>
</dbReference>
<dbReference type="RefSeq" id="NP_187198.1">
    <property type="nucleotide sequence ID" value="NM_111420.2"/>
</dbReference>
<dbReference type="SMR" id="Q9MA60"/>
<dbReference type="FunCoup" id="Q9MA60">
    <property type="interactions" value="127"/>
</dbReference>
<dbReference type="STRING" id="3702.Q9MA60"/>
<dbReference type="iPTMnet" id="Q9MA60"/>
<dbReference type="PaxDb" id="3702-AT3G05470.1"/>
<dbReference type="ProteomicsDB" id="230092"/>
<dbReference type="EnsemblPlants" id="AT3G05470.1">
    <property type="protein sequence ID" value="AT3G05470.1"/>
    <property type="gene ID" value="AT3G05470"/>
</dbReference>
<dbReference type="GeneID" id="819712"/>
<dbReference type="Gramene" id="AT3G05470.1">
    <property type="protein sequence ID" value="AT3G05470.1"/>
    <property type="gene ID" value="AT3G05470"/>
</dbReference>
<dbReference type="KEGG" id="ath:AT3G05470"/>
<dbReference type="Araport" id="AT3G05470"/>
<dbReference type="TAIR" id="AT3G05470">
    <property type="gene designation" value="FH11"/>
</dbReference>
<dbReference type="eggNOG" id="KOG1922">
    <property type="taxonomic scope" value="Eukaryota"/>
</dbReference>
<dbReference type="HOGENOM" id="CLU_007699_2_0_1"/>
<dbReference type="InParanoid" id="Q9MA60"/>
<dbReference type="OMA" id="PEDCHSS"/>
<dbReference type="OrthoDB" id="1668162at2759"/>
<dbReference type="PhylomeDB" id="Q9MA60"/>
<dbReference type="PRO" id="PR:Q9MA60"/>
<dbReference type="Proteomes" id="UP000006548">
    <property type="component" value="Chromosome 3"/>
</dbReference>
<dbReference type="ExpressionAtlas" id="Q9MA60">
    <property type="expression patterns" value="baseline and differential"/>
</dbReference>
<dbReference type="GO" id="GO:0016020">
    <property type="term" value="C:membrane"/>
    <property type="evidence" value="ECO:0007669"/>
    <property type="project" value="UniProtKB-SubCell"/>
</dbReference>
<dbReference type="GO" id="GO:0003779">
    <property type="term" value="F:actin binding"/>
    <property type="evidence" value="ECO:0000250"/>
    <property type="project" value="TAIR"/>
</dbReference>
<dbReference type="GO" id="GO:0051015">
    <property type="term" value="F:actin filament binding"/>
    <property type="evidence" value="ECO:0007669"/>
    <property type="project" value="InterPro"/>
</dbReference>
<dbReference type="GO" id="GO:0045010">
    <property type="term" value="P:actin nucleation"/>
    <property type="evidence" value="ECO:0007669"/>
    <property type="project" value="InterPro"/>
</dbReference>
<dbReference type="FunFam" id="1.20.58.2220:FF:000024">
    <property type="entry name" value="Formin-like protein"/>
    <property type="match status" value="1"/>
</dbReference>
<dbReference type="Gene3D" id="1.20.58.2220">
    <property type="entry name" value="Formin, FH2 domain"/>
    <property type="match status" value="1"/>
</dbReference>
<dbReference type="InterPro" id="IPR015425">
    <property type="entry name" value="FH2_Formin"/>
</dbReference>
<dbReference type="InterPro" id="IPR042201">
    <property type="entry name" value="FH2_Formin_sf"/>
</dbReference>
<dbReference type="InterPro" id="IPR027643">
    <property type="entry name" value="Formin-like_plant"/>
</dbReference>
<dbReference type="PANTHER" id="PTHR23213:SF177">
    <property type="entry name" value="FORMIN-LIKE PROTEIN 11"/>
    <property type="match status" value="1"/>
</dbReference>
<dbReference type="PANTHER" id="PTHR23213">
    <property type="entry name" value="FORMIN-RELATED"/>
    <property type="match status" value="1"/>
</dbReference>
<dbReference type="Pfam" id="PF02181">
    <property type="entry name" value="FH2"/>
    <property type="match status" value="1"/>
</dbReference>
<dbReference type="SMART" id="SM00498">
    <property type="entry name" value="FH2"/>
    <property type="match status" value="1"/>
</dbReference>
<dbReference type="SUPFAM" id="SSF101447">
    <property type="entry name" value="Formin homology 2 domain (FH2 domain)"/>
    <property type="match status" value="1"/>
</dbReference>
<dbReference type="PROSITE" id="PS51444">
    <property type="entry name" value="FH2"/>
    <property type="match status" value="1"/>
</dbReference>
<organism>
    <name type="scientific">Arabidopsis thaliana</name>
    <name type="common">Mouse-ear cress</name>
    <dbReference type="NCBI Taxonomy" id="3702"/>
    <lineage>
        <taxon>Eukaryota</taxon>
        <taxon>Viridiplantae</taxon>
        <taxon>Streptophyta</taxon>
        <taxon>Embryophyta</taxon>
        <taxon>Tracheophyta</taxon>
        <taxon>Spermatophyta</taxon>
        <taxon>Magnoliopsida</taxon>
        <taxon>eudicotyledons</taxon>
        <taxon>Gunneridae</taxon>
        <taxon>Pentapetalae</taxon>
        <taxon>rosids</taxon>
        <taxon>malvids</taxon>
        <taxon>Brassicales</taxon>
        <taxon>Brassicaceae</taxon>
        <taxon>Camelineae</taxon>
        <taxon>Arabidopsis</taxon>
    </lineage>
</organism>
<comment type="function">
    <text evidence="1">Might be involved in the organization and polarity of the actin cytoskeleton.</text>
</comment>
<comment type="subcellular location">
    <subcellularLocation>
        <location evidence="5">Membrane</location>
        <topology evidence="5">Single-pass membrane protein</topology>
    </subcellularLocation>
</comment>
<comment type="similarity">
    <text evidence="5">Belongs to the formin-like family. Class-I subfamily.</text>
</comment>
<feature type="signal peptide" evidence="2">
    <location>
        <begin position="1"/>
        <end position="18"/>
    </location>
</feature>
<feature type="chain" id="PRO_0000308536" description="Formin-like protein 11">
    <location>
        <begin position="19"/>
        <end position="884"/>
    </location>
</feature>
<feature type="transmembrane region" description="Helical" evidence="2">
    <location>
        <begin position="158"/>
        <end position="178"/>
    </location>
</feature>
<feature type="domain" description="FH2" evidence="3">
    <location>
        <begin position="461"/>
        <end position="884"/>
    </location>
</feature>
<feature type="region of interest" description="Disordered" evidence="4">
    <location>
        <begin position="89"/>
        <end position="143"/>
    </location>
</feature>
<feature type="region of interest" description="Disordered" evidence="4">
    <location>
        <begin position="307"/>
        <end position="384"/>
    </location>
</feature>
<feature type="region of interest" description="Disordered" evidence="4">
    <location>
        <begin position="416"/>
        <end position="469"/>
    </location>
</feature>
<feature type="region of interest" description="Disordered" evidence="4">
    <location>
        <begin position="512"/>
        <end position="532"/>
    </location>
</feature>
<feature type="compositionally biased region" description="Pro residues" evidence="4">
    <location>
        <begin position="97"/>
        <end position="107"/>
    </location>
</feature>
<feature type="compositionally biased region" description="Pro residues" evidence="4">
    <location>
        <begin position="115"/>
        <end position="126"/>
    </location>
</feature>
<feature type="compositionally biased region" description="Low complexity" evidence="4">
    <location>
        <begin position="329"/>
        <end position="343"/>
    </location>
</feature>
<feature type="compositionally biased region" description="Basic and acidic residues" evidence="4">
    <location>
        <begin position="346"/>
        <end position="358"/>
    </location>
</feature>
<feature type="compositionally biased region" description="Pro residues" evidence="4">
    <location>
        <begin position="367"/>
        <end position="379"/>
    </location>
</feature>
<feature type="compositionally biased region" description="Pro residues" evidence="4">
    <location>
        <begin position="425"/>
        <end position="436"/>
    </location>
</feature>